<keyword id="KW-0027">Amidation</keyword>
<keyword id="KW-0165">Cleavage on pair of basic residues</keyword>
<keyword id="KW-0528">Neurotoxin</keyword>
<keyword id="KW-0964">Secreted</keyword>
<keyword id="KW-0732">Signal</keyword>
<keyword id="KW-0800">Toxin</keyword>
<feature type="signal peptide" evidence="2">
    <location>
        <begin position="1"/>
        <end position="19"/>
    </location>
</feature>
<feature type="propeptide" id="PRO_0000446244" evidence="6">
    <location>
        <begin position="20"/>
        <end position="26"/>
    </location>
</feature>
<feature type="peptide" id="PRO_0000446245" description="Conorfamide-Tx1" evidence="6">
    <location>
        <begin position="27"/>
        <end position="46"/>
    </location>
</feature>
<feature type="propeptide" id="PRO_0000446246" evidence="6">
    <location>
        <begin position="47"/>
        <end position="62"/>
    </location>
</feature>
<feature type="modified residue" description="Tyrosine amide" evidence="1">
    <location>
        <position position="46"/>
    </location>
</feature>
<sequence length="62" mass="7007">MSGRGFLLLALLLLVTVEATKVEKNKPGVLDIPVKSNSDDDSIFRYGRRDMQSPLLSERLRF</sequence>
<protein>
    <recommendedName>
        <fullName evidence="1 4">Conorfamide-Tx1</fullName>
        <shortName evidence="4">CNF-Tx1</shortName>
    </recommendedName>
    <alternativeName>
        <fullName evidence="1 4">Cono-RFamide-Tx1</fullName>
    </alternativeName>
</protein>
<reference key="1">
    <citation type="journal article" date="2018" name="Toxicon">
        <title>Conopeptides promote itch through human itch receptor hMgprX1.</title>
        <authorList>
            <person name="Espino S.S."/>
            <person name="Robinson S.D."/>
            <person name="Safavi-Hemami H."/>
            <person name="Gajewiak J."/>
            <person name="Yang W."/>
            <person name="Olivera B.M."/>
            <person name="Liu Q."/>
        </authorList>
    </citation>
    <scope>NUCLEOTIDE SEQUENCE [MRNA]</scope>
    <scope>FUNCTION</scope>
    <scope>SYNTHESIS OF 27-46</scope>
</reference>
<comment type="function">
    <text evidence="3">This peptide does not show activity on human and mouse sensory neuron-specific G-protein coupled receptors MRGPRX1.</text>
</comment>
<comment type="subcellular location">
    <subcellularLocation>
        <location evidence="6">Secreted</location>
    </subcellularLocation>
</comment>
<comment type="tissue specificity">
    <text evidence="6">Expressed by the venom duct.</text>
</comment>
<comment type="miscellaneous">
    <text evidence="5">Negative results: the mature peptide does not contain cysteine residue.</text>
</comment>
<comment type="similarity">
    <text evidence="5">Belongs to the FARP (FMRFamide related peptide) family.</text>
</comment>
<proteinExistence type="inferred from homology"/>
<accession>P0DM26</accession>
<dbReference type="GO" id="GO:0005576">
    <property type="term" value="C:extracellular region"/>
    <property type="evidence" value="ECO:0007669"/>
    <property type="project" value="UniProtKB-SubCell"/>
</dbReference>
<dbReference type="GO" id="GO:0090729">
    <property type="term" value="F:toxin activity"/>
    <property type="evidence" value="ECO:0007669"/>
    <property type="project" value="UniProtKB-KW"/>
</dbReference>
<name>CRFA1_CONTE</name>
<organism>
    <name type="scientific">Conus textile</name>
    <name type="common">Cloth-of-gold cone</name>
    <dbReference type="NCBI Taxonomy" id="6494"/>
    <lineage>
        <taxon>Eukaryota</taxon>
        <taxon>Metazoa</taxon>
        <taxon>Spiralia</taxon>
        <taxon>Lophotrochozoa</taxon>
        <taxon>Mollusca</taxon>
        <taxon>Gastropoda</taxon>
        <taxon>Caenogastropoda</taxon>
        <taxon>Neogastropoda</taxon>
        <taxon>Conoidea</taxon>
        <taxon>Conidae</taxon>
        <taxon>Conus</taxon>
        <taxon>Cylinder</taxon>
    </lineage>
</organism>
<evidence type="ECO:0000250" key="1">
    <source>
        <dbReference type="UniProtKB" id="P0DOZ7"/>
    </source>
</evidence>
<evidence type="ECO:0000255" key="2"/>
<evidence type="ECO:0000269" key="3">
    <source>
    </source>
</evidence>
<evidence type="ECO:0000303" key="4">
    <source>
    </source>
</evidence>
<evidence type="ECO:0000305" key="5"/>
<evidence type="ECO:0000305" key="6">
    <source>
    </source>
</evidence>